<keyword id="KW-0963">Cytoplasm</keyword>
<keyword id="KW-0539">Nucleus</keyword>
<keyword id="KW-1185">Reference proteome</keyword>
<keyword id="KW-0690">Ribosome biogenesis</keyword>
<keyword id="KW-0694">RNA-binding</keyword>
<comment type="function">
    <text evidence="1">Required for small ribosomal subunit (SSU) synthesis. Has a role in the processing of early nucleolar and late cytoplasmic pre-RNA species (By similarity).</text>
</comment>
<comment type="subunit">
    <text evidence="1">Component of the small ribosomal subunit, ribosomal RNA processing complex (SSU RRP complex).</text>
</comment>
<comment type="subcellular location">
    <subcellularLocation>
        <location evidence="2">Cytoplasm</location>
    </subcellularLocation>
    <subcellularLocation>
        <location evidence="2">Nucleus</location>
        <location evidence="2">Nucleolus</location>
    </subcellularLocation>
</comment>
<comment type="similarity">
    <text evidence="4">Belongs to the PNO1 family.</text>
</comment>
<organism>
    <name type="scientific">Coccidioides immitis (strain RS)</name>
    <name type="common">Valley fever fungus</name>
    <dbReference type="NCBI Taxonomy" id="246410"/>
    <lineage>
        <taxon>Eukaryota</taxon>
        <taxon>Fungi</taxon>
        <taxon>Dikarya</taxon>
        <taxon>Ascomycota</taxon>
        <taxon>Pezizomycotina</taxon>
        <taxon>Eurotiomycetes</taxon>
        <taxon>Eurotiomycetidae</taxon>
        <taxon>Onygenales</taxon>
        <taxon>Onygenaceae</taxon>
        <taxon>Coccidioides</taxon>
    </lineage>
</organism>
<sequence>MPAPTSRLRAPEELGKNAAASAPQINQNEDDVLIDSSAPLPEITTTSQDADTDMHVDEEGRPLFTPITATDGAYRIENRKVPVPPHRMSPLKAAWPKIYPPLVEHLKLQVRMNIKSKAVELRTSKNTTDTGALQKGEDFIKAFTLGFDVDDAIALLRLDDLYIETFEIKDVKPLNGEHLGRAIGRIAGKDGKTKFAIENASRTRVVLADQKIHILGGFRNIRIAREAIVSLILGSPPGKVYGNLRTVASRMKERF</sequence>
<accession>Q1DQZ5</accession>
<accession>J3K3R9</accession>
<reference key="1">
    <citation type="journal article" date="2009" name="Genome Res.">
        <title>Comparative genomic analyses of the human fungal pathogens Coccidioides and their relatives.</title>
        <authorList>
            <person name="Sharpton T.J."/>
            <person name="Stajich J.E."/>
            <person name="Rounsley S.D."/>
            <person name="Gardner M.J."/>
            <person name="Wortman J.R."/>
            <person name="Jordar V.S."/>
            <person name="Maiti R."/>
            <person name="Kodira C.D."/>
            <person name="Neafsey D.E."/>
            <person name="Zeng Q."/>
            <person name="Hung C.-Y."/>
            <person name="McMahan C."/>
            <person name="Muszewska A."/>
            <person name="Grynberg M."/>
            <person name="Mandel M.A."/>
            <person name="Kellner E.M."/>
            <person name="Barker B.M."/>
            <person name="Galgiani J.N."/>
            <person name="Orbach M.J."/>
            <person name="Kirkland T.N."/>
            <person name="Cole G.T."/>
            <person name="Henn M.R."/>
            <person name="Birren B.W."/>
            <person name="Taylor J.W."/>
        </authorList>
    </citation>
    <scope>NUCLEOTIDE SEQUENCE [LARGE SCALE GENOMIC DNA]</scope>
    <source>
        <strain>RS</strain>
    </source>
</reference>
<reference key="2">
    <citation type="journal article" date="2010" name="Genome Res.">
        <title>Population genomic sequencing of Coccidioides fungi reveals recent hybridization and transposon control.</title>
        <authorList>
            <person name="Neafsey D.E."/>
            <person name="Barker B.M."/>
            <person name="Sharpton T.J."/>
            <person name="Stajich J.E."/>
            <person name="Park D.J."/>
            <person name="Whiston E."/>
            <person name="Hung C.-Y."/>
            <person name="McMahan C."/>
            <person name="White J."/>
            <person name="Sykes S."/>
            <person name="Heiman D."/>
            <person name="Young S."/>
            <person name="Zeng Q."/>
            <person name="Abouelleil A."/>
            <person name="Aftuck L."/>
            <person name="Bessette D."/>
            <person name="Brown A."/>
            <person name="FitzGerald M."/>
            <person name="Lui A."/>
            <person name="Macdonald J.P."/>
            <person name="Priest M."/>
            <person name="Orbach M.J."/>
            <person name="Galgiani J.N."/>
            <person name="Kirkland T.N."/>
            <person name="Cole G.T."/>
            <person name="Birren B.W."/>
            <person name="Henn M.R."/>
            <person name="Taylor J.W."/>
            <person name="Rounsley S.D."/>
        </authorList>
    </citation>
    <scope>GENOME REANNOTATION</scope>
    <source>
        <strain>RS</strain>
    </source>
</reference>
<feature type="chain" id="PRO_0000278367" description="Pre-rRNA-processing protein PNO1">
    <location>
        <begin position="1"/>
        <end position="255"/>
    </location>
</feature>
<feature type="domain" description="KH">
    <location>
        <begin position="176"/>
        <end position="228"/>
    </location>
</feature>
<feature type="region of interest" description="Disordered" evidence="3">
    <location>
        <begin position="1"/>
        <end position="31"/>
    </location>
</feature>
<name>PNO1_COCIM</name>
<protein>
    <recommendedName>
        <fullName>Pre-rRNA-processing protein PNO1</fullName>
    </recommendedName>
</protein>
<evidence type="ECO:0000250" key="1"/>
<evidence type="ECO:0000250" key="2">
    <source>
        <dbReference type="UniProtKB" id="Q99216"/>
    </source>
</evidence>
<evidence type="ECO:0000256" key="3">
    <source>
        <dbReference type="SAM" id="MobiDB-lite"/>
    </source>
</evidence>
<evidence type="ECO:0000305" key="4"/>
<dbReference type="EMBL" id="GG704912">
    <property type="protein sequence ID" value="EAS31789.3"/>
    <property type="molecule type" value="Genomic_DNA"/>
</dbReference>
<dbReference type="RefSeq" id="XP_001243372.1">
    <property type="nucleotide sequence ID" value="XM_001243371.2"/>
</dbReference>
<dbReference type="SMR" id="Q1DQZ5"/>
<dbReference type="FunCoup" id="Q1DQZ5">
    <property type="interactions" value="885"/>
</dbReference>
<dbReference type="STRING" id="246410.Q1DQZ5"/>
<dbReference type="GeneID" id="4562347"/>
<dbReference type="KEGG" id="cim:CIMG_07268"/>
<dbReference type="VEuPathDB" id="FungiDB:CIMG_07268"/>
<dbReference type="InParanoid" id="Q1DQZ5"/>
<dbReference type="OMA" id="TPLRNNW"/>
<dbReference type="OrthoDB" id="1932641at2759"/>
<dbReference type="Proteomes" id="UP000001261">
    <property type="component" value="Unassembled WGS sequence"/>
</dbReference>
<dbReference type="GO" id="GO:0005737">
    <property type="term" value="C:cytoplasm"/>
    <property type="evidence" value="ECO:0007669"/>
    <property type="project" value="UniProtKB-SubCell"/>
</dbReference>
<dbReference type="GO" id="GO:0005730">
    <property type="term" value="C:nucleolus"/>
    <property type="evidence" value="ECO:0007669"/>
    <property type="project" value="UniProtKB-SubCell"/>
</dbReference>
<dbReference type="GO" id="GO:0003723">
    <property type="term" value="F:RNA binding"/>
    <property type="evidence" value="ECO:0007669"/>
    <property type="project" value="UniProtKB-KW"/>
</dbReference>
<dbReference type="GO" id="GO:0042254">
    <property type="term" value="P:ribosome biogenesis"/>
    <property type="evidence" value="ECO:0007669"/>
    <property type="project" value="UniProtKB-KW"/>
</dbReference>
<dbReference type="CDD" id="cd22391">
    <property type="entry name" value="KH-I_PNO1_rpt1"/>
    <property type="match status" value="1"/>
</dbReference>
<dbReference type="CDD" id="cd22392">
    <property type="entry name" value="KH-I_PNO1_rpt2"/>
    <property type="match status" value="1"/>
</dbReference>
<dbReference type="FunFam" id="3.30.1370.10:FF:000009">
    <property type="entry name" value="RNA-binding protein PNO1"/>
    <property type="match status" value="1"/>
</dbReference>
<dbReference type="Gene3D" id="3.30.1370.10">
    <property type="entry name" value="K Homology domain, type 1"/>
    <property type="match status" value="1"/>
</dbReference>
<dbReference type="InterPro" id="IPR055212">
    <property type="entry name" value="KH-I_PNO1_first"/>
</dbReference>
<dbReference type="InterPro" id="IPR004087">
    <property type="entry name" value="KH_dom"/>
</dbReference>
<dbReference type="InterPro" id="IPR036612">
    <property type="entry name" value="KH_dom_type_1_sf"/>
</dbReference>
<dbReference type="InterPro" id="IPR055211">
    <property type="entry name" value="KH_PNO1_2nd"/>
</dbReference>
<dbReference type="PANTHER" id="PTHR12826">
    <property type="entry name" value="RIBONUCLEASE Y"/>
    <property type="match status" value="1"/>
</dbReference>
<dbReference type="PANTHER" id="PTHR12826:SF13">
    <property type="entry name" value="RNA-BINDING PROTEIN PNO1"/>
    <property type="match status" value="1"/>
</dbReference>
<dbReference type="Pfam" id="PF22891">
    <property type="entry name" value="KH_PNO1_2nd"/>
    <property type="match status" value="1"/>
</dbReference>
<dbReference type="SMART" id="SM00322">
    <property type="entry name" value="KH"/>
    <property type="match status" value="1"/>
</dbReference>
<dbReference type="SUPFAM" id="SSF54791">
    <property type="entry name" value="Eukaryotic type KH-domain (KH-domain type I)"/>
    <property type="match status" value="1"/>
</dbReference>
<proteinExistence type="inferred from homology"/>
<gene>
    <name type="primary">PNO1</name>
    <name type="ORF">CIMG_07268</name>
</gene>